<gene>
    <name type="ordered locus">Pcar_1935</name>
</gene>
<dbReference type="EMBL" id="CP000142">
    <property type="protein sequence ID" value="ABA89176.1"/>
    <property type="molecule type" value="Genomic_DNA"/>
</dbReference>
<dbReference type="RefSeq" id="WP_011341681.1">
    <property type="nucleotide sequence ID" value="NC_007498.2"/>
</dbReference>
<dbReference type="SMR" id="Q3A381"/>
<dbReference type="STRING" id="338963.Pcar_1935"/>
<dbReference type="KEGG" id="pca:Pcar_1935"/>
<dbReference type="eggNOG" id="COG1660">
    <property type="taxonomic scope" value="Bacteria"/>
</dbReference>
<dbReference type="HOGENOM" id="CLU_059558_0_0_7"/>
<dbReference type="OrthoDB" id="9784461at2"/>
<dbReference type="Proteomes" id="UP000002534">
    <property type="component" value="Chromosome"/>
</dbReference>
<dbReference type="GO" id="GO:0005524">
    <property type="term" value="F:ATP binding"/>
    <property type="evidence" value="ECO:0007669"/>
    <property type="project" value="UniProtKB-UniRule"/>
</dbReference>
<dbReference type="GO" id="GO:0005525">
    <property type="term" value="F:GTP binding"/>
    <property type="evidence" value="ECO:0007669"/>
    <property type="project" value="UniProtKB-UniRule"/>
</dbReference>
<dbReference type="Gene3D" id="3.40.50.300">
    <property type="entry name" value="P-loop containing nucleotide triphosphate hydrolases"/>
    <property type="match status" value="1"/>
</dbReference>
<dbReference type="HAMAP" id="MF_00636">
    <property type="entry name" value="RapZ_like"/>
    <property type="match status" value="1"/>
</dbReference>
<dbReference type="InterPro" id="IPR027417">
    <property type="entry name" value="P-loop_NTPase"/>
</dbReference>
<dbReference type="InterPro" id="IPR005337">
    <property type="entry name" value="RapZ-like"/>
</dbReference>
<dbReference type="InterPro" id="IPR053930">
    <property type="entry name" value="RapZ-like_N"/>
</dbReference>
<dbReference type="InterPro" id="IPR053931">
    <property type="entry name" value="RapZ_C"/>
</dbReference>
<dbReference type="NCBIfam" id="NF003828">
    <property type="entry name" value="PRK05416.1"/>
    <property type="match status" value="1"/>
</dbReference>
<dbReference type="PANTHER" id="PTHR30448">
    <property type="entry name" value="RNASE ADAPTER PROTEIN RAPZ"/>
    <property type="match status" value="1"/>
</dbReference>
<dbReference type="PANTHER" id="PTHR30448:SF0">
    <property type="entry name" value="RNASE ADAPTER PROTEIN RAPZ"/>
    <property type="match status" value="1"/>
</dbReference>
<dbReference type="Pfam" id="PF22740">
    <property type="entry name" value="PapZ_C"/>
    <property type="match status" value="1"/>
</dbReference>
<dbReference type="Pfam" id="PF03668">
    <property type="entry name" value="RapZ-like_N"/>
    <property type="match status" value="1"/>
</dbReference>
<dbReference type="PIRSF" id="PIRSF005052">
    <property type="entry name" value="P-loopkin"/>
    <property type="match status" value="1"/>
</dbReference>
<dbReference type="SUPFAM" id="SSF52540">
    <property type="entry name" value="P-loop containing nucleoside triphosphate hydrolases"/>
    <property type="match status" value="1"/>
</dbReference>
<keyword id="KW-0067">ATP-binding</keyword>
<keyword id="KW-0342">GTP-binding</keyword>
<keyword id="KW-0547">Nucleotide-binding</keyword>
<keyword id="KW-1185">Reference proteome</keyword>
<name>Y1935_SYNC1</name>
<proteinExistence type="inferred from homology"/>
<protein>
    <recommendedName>
        <fullName evidence="1">Nucleotide-binding protein Pcar_1935</fullName>
    </recommendedName>
</protein>
<comment type="function">
    <text evidence="1">Displays ATPase and GTPase activities.</text>
</comment>
<comment type="similarity">
    <text evidence="1">Belongs to the RapZ-like family.</text>
</comment>
<accession>Q3A381</accession>
<reference key="1">
    <citation type="submission" date="2005-10" db="EMBL/GenBank/DDBJ databases">
        <title>Complete sequence of Pelobacter carbinolicus DSM 2380.</title>
        <authorList>
            <person name="Copeland A."/>
            <person name="Lucas S."/>
            <person name="Lapidus A."/>
            <person name="Barry K."/>
            <person name="Detter J.C."/>
            <person name="Glavina T."/>
            <person name="Hammon N."/>
            <person name="Israni S."/>
            <person name="Pitluck S."/>
            <person name="Chertkov O."/>
            <person name="Schmutz J."/>
            <person name="Larimer F."/>
            <person name="Land M."/>
            <person name="Kyrpides N."/>
            <person name="Ivanova N."/>
            <person name="Richardson P."/>
        </authorList>
    </citation>
    <scope>NUCLEOTIDE SEQUENCE [LARGE SCALE GENOMIC DNA]</scope>
    <source>
        <strain>DSM 2380 / NBRC 103641 / GraBd1</strain>
    </source>
</reference>
<evidence type="ECO:0000255" key="1">
    <source>
        <dbReference type="HAMAP-Rule" id="MF_00636"/>
    </source>
</evidence>
<sequence length="288" mass="32049">MKRARLIIITGLSGSGKTTAARALEDEGFFVVDNLPLVLLPEFLKLHAGSAVAGSNVAVVVDVRNKPYLEGYKQTLAEVRSAGHVVDIFFFDAVDDVLLRRYSETRRRHPLSQKEGVAESIRQERALLGGIMDLSTEIIDSSWLTPHQLRARVVHMVCGDDKGNPLAVLVQSFGYRYGIPQGSDLVMDVRFLPNPHFVPDLRPQTGLSQGVRDFVLGQPACREFLDRFNHLLDYLLPSYRKEGKSYLTISIGCTGGRHRSVAIAEHLRYAIQGEDMVVDGLHRDVAKE</sequence>
<feature type="chain" id="PRO_0000258978" description="Nucleotide-binding protein Pcar_1935">
    <location>
        <begin position="1"/>
        <end position="288"/>
    </location>
</feature>
<feature type="binding site" evidence="1">
    <location>
        <begin position="11"/>
        <end position="18"/>
    </location>
    <ligand>
        <name>ATP</name>
        <dbReference type="ChEBI" id="CHEBI:30616"/>
    </ligand>
</feature>
<feature type="binding site" evidence="1">
    <location>
        <begin position="62"/>
        <end position="65"/>
    </location>
    <ligand>
        <name>GTP</name>
        <dbReference type="ChEBI" id="CHEBI:37565"/>
    </ligand>
</feature>
<organism>
    <name type="scientific">Syntrophotalea carbinolica (strain DSM 2380 / NBRC 103641 / GraBd1)</name>
    <name type="common">Pelobacter carbinolicus</name>
    <dbReference type="NCBI Taxonomy" id="338963"/>
    <lineage>
        <taxon>Bacteria</taxon>
        <taxon>Pseudomonadati</taxon>
        <taxon>Thermodesulfobacteriota</taxon>
        <taxon>Desulfuromonadia</taxon>
        <taxon>Desulfuromonadales</taxon>
        <taxon>Syntrophotaleaceae</taxon>
        <taxon>Syntrophotalea</taxon>
    </lineage>
</organism>